<name>DCTA_BURP1</name>
<comment type="function">
    <text evidence="1">Responsible for the transport of dicarboxylates such as succinate, fumarate, and malate from the periplasm across the membrane.</text>
</comment>
<comment type="subcellular location">
    <subcellularLocation>
        <location evidence="1">Cell inner membrane</location>
        <topology evidence="1">Multi-pass membrane protein</topology>
    </subcellularLocation>
</comment>
<comment type="similarity">
    <text evidence="1">Belongs to the dicarboxylate/amino acid:cation symporter (DAACS) (TC 2.A.23) family.</text>
</comment>
<comment type="sequence caution" evidence="2">
    <conflict type="erroneous initiation">
        <sequence resource="EMBL-CDS" id="ABA48061"/>
    </conflict>
</comment>
<proteinExistence type="inferred from homology"/>
<protein>
    <recommendedName>
        <fullName evidence="1">C4-dicarboxylate transport protein</fullName>
    </recommendedName>
</protein>
<feature type="chain" id="PRO_0000321978" description="C4-dicarboxylate transport protein">
    <location>
        <begin position="1"/>
        <end position="428"/>
    </location>
</feature>
<feature type="transmembrane region" description="Helical" evidence="1">
    <location>
        <begin position="8"/>
        <end position="28"/>
    </location>
</feature>
<feature type="transmembrane region" description="Helical" evidence="1">
    <location>
        <begin position="44"/>
        <end position="64"/>
    </location>
</feature>
<feature type="transmembrane region" description="Helical" evidence="1">
    <location>
        <begin position="78"/>
        <end position="98"/>
    </location>
</feature>
<feature type="transmembrane region" description="Helical" evidence="1">
    <location>
        <begin position="148"/>
        <end position="168"/>
    </location>
</feature>
<feature type="transmembrane region" description="Helical" evidence="1">
    <location>
        <begin position="184"/>
        <end position="204"/>
    </location>
</feature>
<feature type="transmembrane region" description="Helical" evidence="1">
    <location>
        <begin position="222"/>
        <end position="242"/>
    </location>
</feature>
<feature type="transmembrane region" description="Helical" evidence="1">
    <location>
        <begin position="307"/>
        <end position="327"/>
    </location>
</feature>
<feature type="transmembrane region" description="Helical" evidence="1">
    <location>
        <begin position="355"/>
        <end position="375"/>
    </location>
</feature>
<organism>
    <name type="scientific">Burkholderia pseudomallei (strain 1710b)</name>
    <dbReference type="NCBI Taxonomy" id="320372"/>
    <lineage>
        <taxon>Bacteria</taxon>
        <taxon>Pseudomonadati</taxon>
        <taxon>Pseudomonadota</taxon>
        <taxon>Betaproteobacteria</taxon>
        <taxon>Burkholderiales</taxon>
        <taxon>Burkholderiaceae</taxon>
        <taxon>Burkholderia</taxon>
        <taxon>pseudomallei group</taxon>
    </lineage>
</organism>
<accession>Q3JWJ9</accession>
<gene>
    <name evidence="1" type="primary">dctA</name>
    <name type="ordered locus">BURPS1710b_0640</name>
</gene>
<dbReference type="EMBL" id="CP000124">
    <property type="protein sequence ID" value="ABA48061.1"/>
    <property type="status" value="ALT_INIT"/>
    <property type="molecule type" value="Genomic_DNA"/>
</dbReference>
<dbReference type="RefSeq" id="WP_004526010.1">
    <property type="nucleotide sequence ID" value="NC_007434.1"/>
</dbReference>
<dbReference type="SMR" id="Q3JWJ9"/>
<dbReference type="EnsemblBacteria" id="ABA48061">
    <property type="protein sequence ID" value="ABA48061"/>
    <property type="gene ID" value="BURPS1710b_0640"/>
</dbReference>
<dbReference type="KEGG" id="bpm:BURPS1710b_0640"/>
<dbReference type="HOGENOM" id="CLU_019375_7_0_4"/>
<dbReference type="Proteomes" id="UP000002700">
    <property type="component" value="Chromosome I"/>
</dbReference>
<dbReference type="GO" id="GO:0005886">
    <property type="term" value="C:plasma membrane"/>
    <property type="evidence" value="ECO:0007669"/>
    <property type="project" value="UniProtKB-SubCell"/>
</dbReference>
<dbReference type="GO" id="GO:0015138">
    <property type="term" value="F:fumarate transmembrane transporter activity"/>
    <property type="evidence" value="ECO:0007669"/>
    <property type="project" value="TreeGrafter"/>
</dbReference>
<dbReference type="GO" id="GO:0015366">
    <property type="term" value="F:malate:proton symporter activity"/>
    <property type="evidence" value="ECO:0007669"/>
    <property type="project" value="TreeGrafter"/>
</dbReference>
<dbReference type="GO" id="GO:0015141">
    <property type="term" value="F:succinate transmembrane transporter activity"/>
    <property type="evidence" value="ECO:0007669"/>
    <property type="project" value="TreeGrafter"/>
</dbReference>
<dbReference type="GO" id="GO:0070778">
    <property type="term" value="P:L-aspartate transmembrane transport"/>
    <property type="evidence" value="ECO:0007669"/>
    <property type="project" value="TreeGrafter"/>
</dbReference>
<dbReference type="FunFam" id="1.10.3860.10:FF:000001">
    <property type="entry name" value="C4-dicarboxylate transport protein"/>
    <property type="match status" value="1"/>
</dbReference>
<dbReference type="Gene3D" id="1.10.3860.10">
    <property type="entry name" value="Sodium:dicarboxylate symporter"/>
    <property type="match status" value="1"/>
</dbReference>
<dbReference type="HAMAP" id="MF_01300">
    <property type="entry name" value="C4_dicarb_transport"/>
    <property type="match status" value="1"/>
</dbReference>
<dbReference type="InterPro" id="IPR023954">
    <property type="entry name" value="C4_dicarb_transport"/>
</dbReference>
<dbReference type="InterPro" id="IPR001991">
    <property type="entry name" value="Na-dicarboxylate_symporter"/>
</dbReference>
<dbReference type="InterPro" id="IPR018107">
    <property type="entry name" value="Na-dicarboxylate_symporter_CS"/>
</dbReference>
<dbReference type="InterPro" id="IPR036458">
    <property type="entry name" value="Na:dicarbo_symporter_sf"/>
</dbReference>
<dbReference type="NCBIfam" id="NF002461">
    <property type="entry name" value="PRK01663.1"/>
    <property type="match status" value="1"/>
</dbReference>
<dbReference type="NCBIfam" id="NF009587">
    <property type="entry name" value="PRK13027.1"/>
    <property type="match status" value="1"/>
</dbReference>
<dbReference type="PANTHER" id="PTHR42865:SF1">
    <property type="entry name" value="AEROBIC C4-DICARBOXYLATE TRANSPORT PROTEIN"/>
    <property type="match status" value="1"/>
</dbReference>
<dbReference type="PANTHER" id="PTHR42865">
    <property type="entry name" value="PROTON/GLUTAMATE-ASPARTATE SYMPORTER"/>
    <property type="match status" value="1"/>
</dbReference>
<dbReference type="Pfam" id="PF00375">
    <property type="entry name" value="SDF"/>
    <property type="match status" value="1"/>
</dbReference>
<dbReference type="PRINTS" id="PR00173">
    <property type="entry name" value="EDTRNSPORT"/>
</dbReference>
<dbReference type="SUPFAM" id="SSF118215">
    <property type="entry name" value="Proton glutamate symport protein"/>
    <property type="match status" value="1"/>
</dbReference>
<dbReference type="PROSITE" id="PS00713">
    <property type="entry name" value="NA_DICARBOXYL_SYMP_1"/>
    <property type="match status" value="1"/>
</dbReference>
<dbReference type="PROSITE" id="PS00714">
    <property type="entry name" value="NA_DICARBOXYL_SYMP_2"/>
    <property type="match status" value="1"/>
</dbReference>
<reference key="1">
    <citation type="journal article" date="2010" name="Genome Biol. Evol.">
        <title>Continuing evolution of Burkholderia mallei through genome reduction and large-scale rearrangements.</title>
        <authorList>
            <person name="Losada L."/>
            <person name="Ronning C.M."/>
            <person name="DeShazer D."/>
            <person name="Woods D."/>
            <person name="Fedorova N."/>
            <person name="Kim H.S."/>
            <person name="Shabalina S.A."/>
            <person name="Pearson T.R."/>
            <person name="Brinkac L."/>
            <person name="Tan P."/>
            <person name="Nandi T."/>
            <person name="Crabtree J."/>
            <person name="Badger J."/>
            <person name="Beckstrom-Sternberg S."/>
            <person name="Saqib M."/>
            <person name="Schutzer S.E."/>
            <person name="Keim P."/>
            <person name="Nierman W.C."/>
        </authorList>
    </citation>
    <scope>NUCLEOTIDE SEQUENCE [LARGE SCALE GENOMIC DNA]</scope>
    <source>
        <strain>1710b</strain>
    </source>
</reference>
<evidence type="ECO:0000255" key="1">
    <source>
        <dbReference type="HAMAP-Rule" id="MF_01300"/>
    </source>
</evidence>
<evidence type="ECO:0000305" key="2"/>
<sequence length="428" mass="45261">MKKPFYKVLYVQVIFAIVVGVILGHYYPSLAVDMKPLGDGFIKLIKMVIGPIIFCTVVTGIAGMQDMKKVGRVGGKALLYFEIVSTCALVLGLAATHILRPGVGFNIDPATLNGKEVASYAAKAHGQSSVDFLMHIIPNTMIDAFAQGEILQILLIALLFGSVLAHLGERGRVVTDFIDGITRVLFGIVHIVTKLAPIGAFGAMAFTIGKYGVGSLVPLLKLIGTFYLTSVVFVLVVLGAIARFTGFSIIRFVGYIKEELLIVLGTSSSEAALPQLMEKLEKAGCSRSVVGLVVPTGYSFNLDGTNIYMTMAVLFIAQATNIELTWMQQLTLLAVAMLTSKGASGVTGAGFITLAATLAVVPTIPLSGMVLILGIDRFMSECRALTNIVGNGVATVVVSAWEKELDRAKLRAALSGNGEAAAGEAARV</sequence>
<keyword id="KW-0997">Cell inner membrane</keyword>
<keyword id="KW-1003">Cell membrane</keyword>
<keyword id="KW-0472">Membrane</keyword>
<keyword id="KW-0769">Symport</keyword>
<keyword id="KW-0812">Transmembrane</keyword>
<keyword id="KW-1133">Transmembrane helix</keyword>
<keyword id="KW-0813">Transport</keyword>